<sequence>MSKIVKVIGREIIDSRGNPTVEAEVHLEGGFVGLAAAPSGASTGSREALELRDGDKSRFLGKGVLKAVAAVNGPIAQAVIGKDAKDQANIDKIMIDLDGTENKSQFGANAILAVSLAAAKAAAASKGMPLYEHIAELNGTPGKFSMPLPMMNIINGGEHADNNVDIQEFMIQPVGAKTLKEAVRIGSEVFHHLAKVLKAKGLNTAVGDEGGYAPNLGSNAEALAVIAEAVKAAGYELGKDVTLAMDCAASEFYKDGKYVLAGEGNKAFTSEEFTHFLEDLTKQYPIVSIEDGLDESDWAGFKYQTEVLGDKIQLVGDDLFVTNTKILKEGIEKGVANSILIKFNQIGSLTETLAAIKMAKDAGYTAVISHRSGETEDATIADLAVGTAAGQIKTGSMSRSDRVAKYNQLIRIEEALGDRAPFNGLKEVKGQ</sequence>
<proteinExistence type="inferred from homology"/>
<comment type="function">
    <text evidence="2">Catalyzes the reversible conversion of 2-phosphoglycerate (2-PG) into phosphoenolpyruvate (PEP). It is essential for the degradation of carbohydrates via glycolysis.</text>
</comment>
<comment type="catalytic activity">
    <reaction evidence="2">
        <text>(2R)-2-phosphoglycerate = phosphoenolpyruvate + H2O</text>
        <dbReference type="Rhea" id="RHEA:10164"/>
        <dbReference type="ChEBI" id="CHEBI:15377"/>
        <dbReference type="ChEBI" id="CHEBI:58289"/>
        <dbReference type="ChEBI" id="CHEBI:58702"/>
        <dbReference type="EC" id="4.2.1.11"/>
    </reaction>
</comment>
<comment type="cofactor">
    <cofactor evidence="2">
        <name>Mg(2+)</name>
        <dbReference type="ChEBI" id="CHEBI:18420"/>
    </cofactor>
    <text evidence="2">Binds a second Mg(2+) ion via substrate during catalysis.</text>
</comment>
<comment type="pathway">
    <text evidence="2">Carbohydrate degradation; glycolysis; pyruvate from D-glyceraldehyde 3-phosphate: step 4/5.</text>
</comment>
<comment type="subunit">
    <text evidence="2">Component of the RNA degradosome, a multiprotein complex involved in RNA processing and mRNA degradation.</text>
</comment>
<comment type="subcellular location">
    <subcellularLocation>
        <location evidence="2">Cytoplasm</location>
    </subcellularLocation>
    <subcellularLocation>
        <location evidence="2">Secreted</location>
    </subcellularLocation>
    <subcellularLocation>
        <location evidence="2">Cell surface</location>
    </subcellularLocation>
    <text evidence="2">Fractions of enolase are present in both the cytoplasm and on the cell surface.</text>
</comment>
<comment type="similarity">
    <text evidence="2">Belongs to the enolase family.</text>
</comment>
<feature type="initiator methionine" description="Removed" evidence="1">
    <location>
        <position position="1"/>
    </location>
</feature>
<feature type="chain" id="PRO_0000134017" description="Enolase">
    <location>
        <begin position="2"/>
        <end position="431"/>
    </location>
</feature>
<feature type="active site" description="Proton donor" evidence="2">
    <location>
        <position position="209"/>
    </location>
</feature>
<feature type="active site" description="Proton acceptor" evidence="2">
    <location>
        <position position="342"/>
    </location>
</feature>
<feature type="binding site" evidence="2">
    <location>
        <position position="167"/>
    </location>
    <ligand>
        <name>(2R)-2-phosphoglycerate</name>
        <dbReference type="ChEBI" id="CHEBI:58289"/>
    </ligand>
</feature>
<feature type="binding site" evidence="2">
    <location>
        <position position="246"/>
    </location>
    <ligand>
        <name>Mg(2+)</name>
        <dbReference type="ChEBI" id="CHEBI:18420"/>
    </ligand>
</feature>
<feature type="binding site" evidence="2">
    <location>
        <position position="290"/>
    </location>
    <ligand>
        <name>Mg(2+)</name>
        <dbReference type="ChEBI" id="CHEBI:18420"/>
    </ligand>
</feature>
<feature type="binding site" evidence="2">
    <location>
        <position position="317"/>
    </location>
    <ligand>
        <name>Mg(2+)</name>
        <dbReference type="ChEBI" id="CHEBI:18420"/>
    </ligand>
</feature>
<feature type="binding site" evidence="2">
    <location>
        <position position="342"/>
    </location>
    <ligand>
        <name>(2R)-2-phosphoglycerate</name>
        <dbReference type="ChEBI" id="CHEBI:58289"/>
    </ligand>
</feature>
<feature type="binding site" evidence="2">
    <location>
        <position position="371"/>
    </location>
    <ligand>
        <name>(2R)-2-phosphoglycerate</name>
        <dbReference type="ChEBI" id="CHEBI:58289"/>
    </ligand>
</feature>
<feature type="binding site" evidence="2">
    <location>
        <position position="372"/>
    </location>
    <ligand>
        <name>(2R)-2-phosphoglycerate</name>
        <dbReference type="ChEBI" id="CHEBI:58289"/>
    </ligand>
</feature>
<feature type="binding site" evidence="2">
    <location>
        <position position="393"/>
    </location>
    <ligand>
        <name>(2R)-2-phosphoglycerate</name>
        <dbReference type="ChEBI" id="CHEBI:58289"/>
    </ligand>
</feature>
<evidence type="ECO:0000250" key="1"/>
<evidence type="ECO:0000255" key="2">
    <source>
        <dbReference type="HAMAP-Rule" id="MF_00318"/>
    </source>
</evidence>
<accession>Q66ED8</accession>
<name>ENO_YERPS</name>
<organism>
    <name type="scientific">Yersinia pseudotuberculosis serotype I (strain IP32953)</name>
    <dbReference type="NCBI Taxonomy" id="273123"/>
    <lineage>
        <taxon>Bacteria</taxon>
        <taxon>Pseudomonadati</taxon>
        <taxon>Pseudomonadota</taxon>
        <taxon>Gammaproteobacteria</taxon>
        <taxon>Enterobacterales</taxon>
        <taxon>Yersiniaceae</taxon>
        <taxon>Yersinia</taxon>
    </lineage>
</organism>
<protein>
    <recommendedName>
        <fullName evidence="2">Enolase</fullName>
        <ecNumber evidence="2">4.2.1.11</ecNumber>
    </recommendedName>
    <alternativeName>
        <fullName evidence="2">2-phospho-D-glycerate hydro-lyase</fullName>
    </alternativeName>
    <alternativeName>
        <fullName evidence="2">2-phosphoglycerate dehydratase</fullName>
    </alternativeName>
</protein>
<reference key="1">
    <citation type="journal article" date="2004" name="Proc. Natl. Acad. Sci. U.S.A.">
        <title>Insights into the evolution of Yersinia pestis through whole-genome comparison with Yersinia pseudotuberculosis.</title>
        <authorList>
            <person name="Chain P.S.G."/>
            <person name="Carniel E."/>
            <person name="Larimer F.W."/>
            <person name="Lamerdin J."/>
            <person name="Stoutland P.O."/>
            <person name="Regala W.M."/>
            <person name="Georgescu A.M."/>
            <person name="Vergez L.M."/>
            <person name="Land M.L."/>
            <person name="Motin V.L."/>
            <person name="Brubaker R.R."/>
            <person name="Fowler J."/>
            <person name="Hinnebusch J."/>
            <person name="Marceau M."/>
            <person name="Medigue C."/>
            <person name="Simonet M."/>
            <person name="Chenal-Francisque V."/>
            <person name="Souza B."/>
            <person name="Dacheux D."/>
            <person name="Elliott J.M."/>
            <person name="Derbise A."/>
            <person name="Hauser L.J."/>
            <person name="Garcia E."/>
        </authorList>
    </citation>
    <scope>NUCLEOTIDE SEQUENCE [LARGE SCALE GENOMIC DNA]</scope>
    <source>
        <strain>IP32953</strain>
    </source>
</reference>
<dbReference type="EC" id="4.2.1.11" evidence="2"/>
<dbReference type="EMBL" id="BX936398">
    <property type="protein sequence ID" value="CAH19995.1"/>
    <property type="molecule type" value="Genomic_DNA"/>
</dbReference>
<dbReference type="RefSeq" id="WP_011191770.1">
    <property type="nucleotide sequence ID" value="NC_006155.1"/>
</dbReference>
<dbReference type="SMR" id="Q66ED8"/>
<dbReference type="GeneID" id="49787239"/>
<dbReference type="KEGG" id="ypo:BZ17_1801"/>
<dbReference type="KEGG" id="yps:YPTB0755"/>
<dbReference type="PATRIC" id="fig|273123.14.peg.1906"/>
<dbReference type="UniPathway" id="UPA00109">
    <property type="reaction ID" value="UER00187"/>
</dbReference>
<dbReference type="Proteomes" id="UP000001011">
    <property type="component" value="Chromosome"/>
</dbReference>
<dbReference type="GO" id="GO:0009986">
    <property type="term" value="C:cell surface"/>
    <property type="evidence" value="ECO:0007669"/>
    <property type="project" value="UniProtKB-SubCell"/>
</dbReference>
<dbReference type="GO" id="GO:0005576">
    <property type="term" value="C:extracellular region"/>
    <property type="evidence" value="ECO:0007669"/>
    <property type="project" value="UniProtKB-SubCell"/>
</dbReference>
<dbReference type="GO" id="GO:0000015">
    <property type="term" value="C:phosphopyruvate hydratase complex"/>
    <property type="evidence" value="ECO:0007669"/>
    <property type="project" value="InterPro"/>
</dbReference>
<dbReference type="GO" id="GO:0000287">
    <property type="term" value="F:magnesium ion binding"/>
    <property type="evidence" value="ECO:0007669"/>
    <property type="project" value="UniProtKB-UniRule"/>
</dbReference>
<dbReference type="GO" id="GO:0004634">
    <property type="term" value="F:phosphopyruvate hydratase activity"/>
    <property type="evidence" value="ECO:0007669"/>
    <property type="project" value="UniProtKB-UniRule"/>
</dbReference>
<dbReference type="GO" id="GO:0006096">
    <property type="term" value="P:glycolytic process"/>
    <property type="evidence" value="ECO:0007669"/>
    <property type="project" value="UniProtKB-UniRule"/>
</dbReference>
<dbReference type="CDD" id="cd03313">
    <property type="entry name" value="enolase"/>
    <property type="match status" value="1"/>
</dbReference>
<dbReference type="FunFam" id="3.20.20.120:FF:000001">
    <property type="entry name" value="Enolase"/>
    <property type="match status" value="1"/>
</dbReference>
<dbReference type="FunFam" id="3.30.390.10:FF:000001">
    <property type="entry name" value="Enolase"/>
    <property type="match status" value="1"/>
</dbReference>
<dbReference type="Gene3D" id="3.20.20.120">
    <property type="entry name" value="Enolase-like C-terminal domain"/>
    <property type="match status" value="1"/>
</dbReference>
<dbReference type="Gene3D" id="3.30.390.10">
    <property type="entry name" value="Enolase-like, N-terminal domain"/>
    <property type="match status" value="1"/>
</dbReference>
<dbReference type="HAMAP" id="MF_00318">
    <property type="entry name" value="Enolase"/>
    <property type="match status" value="1"/>
</dbReference>
<dbReference type="InterPro" id="IPR000941">
    <property type="entry name" value="Enolase"/>
</dbReference>
<dbReference type="InterPro" id="IPR036849">
    <property type="entry name" value="Enolase-like_C_sf"/>
</dbReference>
<dbReference type="InterPro" id="IPR029017">
    <property type="entry name" value="Enolase-like_N"/>
</dbReference>
<dbReference type="InterPro" id="IPR020810">
    <property type="entry name" value="Enolase_C"/>
</dbReference>
<dbReference type="InterPro" id="IPR020809">
    <property type="entry name" value="Enolase_CS"/>
</dbReference>
<dbReference type="InterPro" id="IPR020811">
    <property type="entry name" value="Enolase_N"/>
</dbReference>
<dbReference type="NCBIfam" id="TIGR01060">
    <property type="entry name" value="eno"/>
    <property type="match status" value="1"/>
</dbReference>
<dbReference type="PANTHER" id="PTHR11902">
    <property type="entry name" value="ENOLASE"/>
    <property type="match status" value="1"/>
</dbReference>
<dbReference type="PANTHER" id="PTHR11902:SF1">
    <property type="entry name" value="ENOLASE"/>
    <property type="match status" value="1"/>
</dbReference>
<dbReference type="Pfam" id="PF00113">
    <property type="entry name" value="Enolase_C"/>
    <property type="match status" value="1"/>
</dbReference>
<dbReference type="Pfam" id="PF03952">
    <property type="entry name" value="Enolase_N"/>
    <property type="match status" value="1"/>
</dbReference>
<dbReference type="PIRSF" id="PIRSF001400">
    <property type="entry name" value="Enolase"/>
    <property type="match status" value="1"/>
</dbReference>
<dbReference type="PRINTS" id="PR00148">
    <property type="entry name" value="ENOLASE"/>
</dbReference>
<dbReference type="SFLD" id="SFLDF00002">
    <property type="entry name" value="enolase"/>
    <property type="match status" value="1"/>
</dbReference>
<dbReference type="SFLD" id="SFLDG00178">
    <property type="entry name" value="enolase"/>
    <property type="match status" value="1"/>
</dbReference>
<dbReference type="SMART" id="SM01192">
    <property type="entry name" value="Enolase_C"/>
    <property type="match status" value="1"/>
</dbReference>
<dbReference type="SMART" id="SM01193">
    <property type="entry name" value="Enolase_N"/>
    <property type="match status" value="1"/>
</dbReference>
<dbReference type="SUPFAM" id="SSF51604">
    <property type="entry name" value="Enolase C-terminal domain-like"/>
    <property type="match status" value="1"/>
</dbReference>
<dbReference type="SUPFAM" id="SSF54826">
    <property type="entry name" value="Enolase N-terminal domain-like"/>
    <property type="match status" value="1"/>
</dbReference>
<dbReference type="PROSITE" id="PS00164">
    <property type="entry name" value="ENOLASE"/>
    <property type="match status" value="1"/>
</dbReference>
<keyword id="KW-0963">Cytoplasm</keyword>
<keyword id="KW-0324">Glycolysis</keyword>
<keyword id="KW-0456">Lyase</keyword>
<keyword id="KW-0460">Magnesium</keyword>
<keyword id="KW-0479">Metal-binding</keyword>
<keyword id="KW-0964">Secreted</keyword>
<gene>
    <name evidence="2" type="primary">eno</name>
    <name type="ordered locus">YPTB0755</name>
</gene>